<comment type="function">
    <text evidence="1">Core subunit of the mitochondrial membrane respiratory chain NADH dehydrogenase (Complex I) which catalyzes electron transfer from NADH through the respiratory chain, using ubiquinone as an electron acceptor. Part of the enzyme membrane arm which is embedded in the lipid bilayer and involved in proton translocation.</text>
</comment>
<comment type="catalytic activity">
    <reaction evidence="1">
        <text>a ubiquinone + NADH + 5 H(+)(in) = a ubiquinol + NAD(+) + 4 H(+)(out)</text>
        <dbReference type="Rhea" id="RHEA:29091"/>
        <dbReference type="Rhea" id="RHEA-COMP:9565"/>
        <dbReference type="Rhea" id="RHEA-COMP:9566"/>
        <dbReference type="ChEBI" id="CHEBI:15378"/>
        <dbReference type="ChEBI" id="CHEBI:16389"/>
        <dbReference type="ChEBI" id="CHEBI:17976"/>
        <dbReference type="ChEBI" id="CHEBI:57540"/>
        <dbReference type="ChEBI" id="CHEBI:57945"/>
        <dbReference type="EC" id="7.1.1.2"/>
    </reaction>
    <physiologicalReaction direction="left-to-right" evidence="1">
        <dbReference type="Rhea" id="RHEA:29092"/>
    </physiologicalReaction>
</comment>
<comment type="subunit">
    <text evidence="2">Core subunit of respiratory chain NADH dehydrogenase (Complex I) which is composed of 45 different subunits.</text>
</comment>
<comment type="subcellular location">
    <subcellularLocation>
        <location evidence="2">Mitochondrion inner membrane</location>
        <topology evidence="3">Multi-pass membrane protein</topology>
    </subcellularLocation>
</comment>
<comment type="similarity">
    <text evidence="4">Belongs to the complex I subunit 4L family.</text>
</comment>
<sequence length="98" mass="10783">MSLTYMNILVAFVISLTGLLMYRSHMMSSLLCLEGMMLSLFVMVTITILNTHLTLASMMPIILLVFAACEAALGLALLVMVSNTYGVDYVQNLNLLQC</sequence>
<protein>
    <recommendedName>
        <fullName>NADH-ubiquinone oxidoreductase chain 4L</fullName>
        <ecNumber>7.1.1.2</ecNumber>
    </recommendedName>
    <alternativeName>
        <fullName>NADH dehydrogenase subunit 4L</fullName>
    </alternativeName>
</protein>
<feature type="chain" id="PRO_0000275072" description="NADH-ubiquinone oxidoreductase chain 4L">
    <location>
        <begin position="1"/>
        <end position="98"/>
    </location>
</feature>
<feature type="transmembrane region" description="Helical" evidence="3">
    <location>
        <begin position="1"/>
        <end position="21"/>
    </location>
</feature>
<feature type="transmembrane region" description="Helical" evidence="3">
    <location>
        <begin position="29"/>
        <end position="49"/>
    </location>
</feature>
<feature type="transmembrane region" description="Helical" evidence="3">
    <location>
        <begin position="61"/>
        <end position="81"/>
    </location>
</feature>
<evidence type="ECO:0000250" key="1">
    <source>
        <dbReference type="UniProtKB" id="P03901"/>
    </source>
</evidence>
<evidence type="ECO:0000250" key="2">
    <source>
        <dbReference type="UniProtKB" id="P03902"/>
    </source>
</evidence>
<evidence type="ECO:0000255" key="3"/>
<evidence type="ECO:0000305" key="4"/>
<geneLocation type="mitochondrion"/>
<reference key="1">
    <citation type="submission" date="2005-03" db="EMBL/GenBank/DDBJ databases">
        <authorList>
            <person name="Sandbrook D."/>
            <person name="McLenachan P."/>
            <person name="Penny D."/>
        </authorList>
    </citation>
    <scope>NUCLEOTIDE SEQUENCE [GENOMIC DNA]</scope>
</reference>
<organism>
    <name type="scientific">Mystacina tuberculata</name>
    <name type="common">New Zealand lesser short-tailed bat</name>
    <dbReference type="NCBI Taxonomy" id="94961"/>
    <lineage>
        <taxon>Eukaryota</taxon>
        <taxon>Metazoa</taxon>
        <taxon>Chordata</taxon>
        <taxon>Craniata</taxon>
        <taxon>Vertebrata</taxon>
        <taxon>Euteleostomi</taxon>
        <taxon>Mammalia</taxon>
        <taxon>Eutheria</taxon>
        <taxon>Laurasiatheria</taxon>
        <taxon>Chiroptera</taxon>
        <taxon>Yangochiroptera</taxon>
        <taxon>Mystacinidae</taxon>
        <taxon>Mystacina</taxon>
    </lineage>
</organism>
<proteinExistence type="inferred from homology"/>
<gene>
    <name type="primary">MT-ND4L</name>
    <name type="synonym">MTND4L</name>
    <name type="synonym">NADH4L</name>
    <name type="synonym">ND4L</name>
</gene>
<keyword id="KW-0249">Electron transport</keyword>
<keyword id="KW-0472">Membrane</keyword>
<keyword id="KW-0496">Mitochondrion</keyword>
<keyword id="KW-0999">Mitochondrion inner membrane</keyword>
<keyword id="KW-0520">NAD</keyword>
<keyword id="KW-0679">Respiratory chain</keyword>
<keyword id="KW-1278">Translocase</keyword>
<keyword id="KW-0812">Transmembrane</keyword>
<keyword id="KW-1133">Transmembrane helix</keyword>
<keyword id="KW-0813">Transport</keyword>
<keyword id="KW-0830">Ubiquinone</keyword>
<dbReference type="EC" id="7.1.1.2"/>
<dbReference type="EMBL" id="AY960981">
    <property type="protein sequence ID" value="AAX50190.1"/>
    <property type="molecule type" value="Genomic_DNA"/>
</dbReference>
<dbReference type="RefSeq" id="YP_220701.1">
    <property type="nucleotide sequence ID" value="NC_006925.1"/>
</dbReference>
<dbReference type="SMR" id="Q58F60"/>
<dbReference type="GeneID" id="3338959"/>
<dbReference type="CTD" id="4539"/>
<dbReference type="GO" id="GO:0005743">
    <property type="term" value="C:mitochondrial inner membrane"/>
    <property type="evidence" value="ECO:0000250"/>
    <property type="project" value="UniProtKB"/>
</dbReference>
<dbReference type="GO" id="GO:0045271">
    <property type="term" value="C:respiratory chain complex I"/>
    <property type="evidence" value="ECO:0000250"/>
    <property type="project" value="UniProtKB"/>
</dbReference>
<dbReference type="GO" id="GO:0008137">
    <property type="term" value="F:NADH dehydrogenase (ubiquinone) activity"/>
    <property type="evidence" value="ECO:0000250"/>
    <property type="project" value="UniProtKB"/>
</dbReference>
<dbReference type="GO" id="GO:0042773">
    <property type="term" value="P:ATP synthesis coupled electron transport"/>
    <property type="evidence" value="ECO:0007669"/>
    <property type="project" value="InterPro"/>
</dbReference>
<dbReference type="FunFam" id="1.10.287.3510:FF:000002">
    <property type="entry name" value="NADH-ubiquinone oxidoreductase chain 4L"/>
    <property type="match status" value="1"/>
</dbReference>
<dbReference type="Gene3D" id="1.10.287.3510">
    <property type="match status" value="1"/>
</dbReference>
<dbReference type="InterPro" id="IPR001133">
    <property type="entry name" value="NADH_UbQ_OxRdtase_chain4L/K"/>
</dbReference>
<dbReference type="InterPro" id="IPR039428">
    <property type="entry name" value="NUOK/Mnh_C1-like"/>
</dbReference>
<dbReference type="PANTHER" id="PTHR11434:SF0">
    <property type="entry name" value="NADH-UBIQUINONE OXIDOREDUCTASE CHAIN 4L"/>
    <property type="match status" value="1"/>
</dbReference>
<dbReference type="PANTHER" id="PTHR11434">
    <property type="entry name" value="NADH-UBIQUINONE OXIDOREDUCTASE SUBUNIT ND4L"/>
    <property type="match status" value="1"/>
</dbReference>
<dbReference type="Pfam" id="PF00420">
    <property type="entry name" value="Oxidored_q2"/>
    <property type="match status" value="1"/>
</dbReference>
<accession>Q58F60</accession>
<name>NU4LM_MYSTU</name>